<feature type="chain" id="PRO_1000093446" description="Peptide chain release factor 1">
    <location>
        <begin position="1"/>
        <end position="361"/>
    </location>
</feature>
<feature type="region of interest" description="Disordered" evidence="2">
    <location>
        <begin position="286"/>
        <end position="306"/>
    </location>
</feature>
<feature type="modified residue" description="N5-methylglutamine" evidence="1">
    <location>
        <position position="237"/>
    </location>
</feature>
<organism>
    <name type="scientific">Coxiella burnetii (strain CbuG_Q212)</name>
    <name type="common">Coxiella burnetii (strain Q212)</name>
    <dbReference type="NCBI Taxonomy" id="434923"/>
    <lineage>
        <taxon>Bacteria</taxon>
        <taxon>Pseudomonadati</taxon>
        <taxon>Pseudomonadota</taxon>
        <taxon>Gammaproteobacteria</taxon>
        <taxon>Legionellales</taxon>
        <taxon>Coxiellaceae</taxon>
        <taxon>Coxiella</taxon>
    </lineage>
</organism>
<comment type="function">
    <text evidence="1">Peptide chain release factor 1 directs the termination of translation in response to the peptide chain termination codons UAG and UAA.</text>
</comment>
<comment type="subcellular location">
    <subcellularLocation>
        <location evidence="1">Cytoplasm</location>
    </subcellularLocation>
</comment>
<comment type="PTM">
    <text evidence="1">Methylated by PrmC. Methylation increases the termination efficiency of RF1.</text>
</comment>
<comment type="similarity">
    <text evidence="1">Belongs to the prokaryotic/mitochondrial release factor family.</text>
</comment>
<name>RF1_COXB2</name>
<evidence type="ECO:0000255" key="1">
    <source>
        <dbReference type="HAMAP-Rule" id="MF_00093"/>
    </source>
</evidence>
<evidence type="ECO:0000256" key="2">
    <source>
        <dbReference type="SAM" id="MobiDB-lite"/>
    </source>
</evidence>
<keyword id="KW-0963">Cytoplasm</keyword>
<keyword id="KW-0488">Methylation</keyword>
<keyword id="KW-0648">Protein biosynthesis</keyword>
<gene>
    <name evidence="1" type="primary">prfA</name>
    <name type="ordered locus">CbuG_1973</name>
</gene>
<reference key="1">
    <citation type="journal article" date="2009" name="Infect. Immun.">
        <title>Comparative genomics reveal extensive transposon-mediated genomic plasticity and diversity among potential effector proteins within the genus Coxiella.</title>
        <authorList>
            <person name="Beare P.A."/>
            <person name="Unsworth N."/>
            <person name="Andoh M."/>
            <person name="Voth D.E."/>
            <person name="Omsland A."/>
            <person name="Gilk S.D."/>
            <person name="Williams K.P."/>
            <person name="Sobral B.W."/>
            <person name="Kupko J.J. III"/>
            <person name="Porcella S.F."/>
            <person name="Samuel J.E."/>
            <person name="Heinzen R.A."/>
        </authorList>
    </citation>
    <scope>NUCLEOTIDE SEQUENCE [LARGE SCALE GENOMIC DNA]</scope>
    <source>
        <strain>CbuG_Q212</strain>
    </source>
</reference>
<dbReference type="EMBL" id="CP001019">
    <property type="protein sequence ID" value="ACJ19215.1"/>
    <property type="molecule type" value="Genomic_DNA"/>
</dbReference>
<dbReference type="RefSeq" id="WP_012570503.1">
    <property type="nucleotide sequence ID" value="NC_011527.1"/>
</dbReference>
<dbReference type="SMR" id="B6J390"/>
<dbReference type="KEGG" id="cbg:CbuG_1973"/>
<dbReference type="HOGENOM" id="CLU_036856_0_1_6"/>
<dbReference type="GO" id="GO:0005737">
    <property type="term" value="C:cytoplasm"/>
    <property type="evidence" value="ECO:0007669"/>
    <property type="project" value="UniProtKB-SubCell"/>
</dbReference>
<dbReference type="GO" id="GO:0016149">
    <property type="term" value="F:translation release factor activity, codon specific"/>
    <property type="evidence" value="ECO:0007669"/>
    <property type="project" value="UniProtKB-UniRule"/>
</dbReference>
<dbReference type="FunFam" id="3.30.160.20:FF:000004">
    <property type="entry name" value="Peptide chain release factor 1"/>
    <property type="match status" value="1"/>
</dbReference>
<dbReference type="FunFam" id="3.30.70.1660:FF:000002">
    <property type="entry name" value="Peptide chain release factor 1"/>
    <property type="match status" value="1"/>
</dbReference>
<dbReference type="FunFam" id="3.30.70.1660:FF:000004">
    <property type="entry name" value="Peptide chain release factor 1"/>
    <property type="match status" value="1"/>
</dbReference>
<dbReference type="Gene3D" id="3.30.160.20">
    <property type="match status" value="1"/>
</dbReference>
<dbReference type="Gene3D" id="3.30.70.1660">
    <property type="match status" value="1"/>
</dbReference>
<dbReference type="Gene3D" id="6.10.140.1950">
    <property type="match status" value="1"/>
</dbReference>
<dbReference type="HAMAP" id="MF_00093">
    <property type="entry name" value="Rel_fac_1"/>
    <property type="match status" value="1"/>
</dbReference>
<dbReference type="InterPro" id="IPR005139">
    <property type="entry name" value="PCRF"/>
</dbReference>
<dbReference type="InterPro" id="IPR000352">
    <property type="entry name" value="Pep_chain_release_fac_I"/>
</dbReference>
<dbReference type="InterPro" id="IPR045853">
    <property type="entry name" value="Pep_chain_release_fac_I_sf"/>
</dbReference>
<dbReference type="InterPro" id="IPR050057">
    <property type="entry name" value="Prokaryotic/Mito_RF"/>
</dbReference>
<dbReference type="InterPro" id="IPR004373">
    <property type="entry name" value="RF-1"/>
</dbReference>
<dbReference type="NCBIfam" id="TIGR00019">
    <property type="entry name" value="prfA"/>
    <property type="match status" value="1"/>
</dbReference>
<dbReference type="NCBIfam" id="NF001859">
    <property type="entry name" value="PRK00591.1"/>
    <property type="match status" value="1"/>
</dbReference>
<dbReference type="PANTHER" id="PTHR43804">
    <property type="entry name" value="LD18447P"/>
    <property type="match status" value="1"/>
</dbReference>
<dbReference type="PANTHER" id="PTHR43804:SF7">
    <property type="entry name" value="LD18447P"/>
    <property type="match status" value="1"/>
</dbReference>
<dbReference type="Pfam" id="PF03462">
    <property type="entry name" value="PCRF"/>
    <property type="match status" value="1"/>
</dbReference>
<dbReference type="Pfam" id="PF00472">
    <property type="entry name" value="RF-1"/>
    <property type="match status" value="1"/>
</dbReference>
<dbReference type="SMART" id="SM00937">
    <property type="entry name" value="PCRF"/>
    <property type="match status" value="1"/>
</dbReference>
<dbReference type="SUPFAM" id="SSF75620">
    <property type="entry name" value="Release factor"/>
    <property type="match status" value="1"/>
</dbReference>
<dbReference type="PROSITE" id="PS00745">
    <property type="entry name" value="RF_PROK_I"/>
    <property type="match status" value="1"/>
</dbReference>
<sequence>MKPSLIEKLKTLTYRYSEIGGLLSDSTVINDQDRYRELGKEYAQLEPIVKCFQQFQQNEKAIESAEEMQQEKDPELRKLAEEELEQLTLKKEELEDQLKLLLVPKDPNDELNVFLEIRAGTGGNEAAIFAGDLFRMYARYAETKGWRVNIVSAHEGEHGGFKEVIARVIGEGVYSQLKFESGAHRVQRVPVTESQGRIHTSACTVAIMPEVDEIDQIKINPAELRIDTFRASGAGGQHVNRTDSAIRITHLPTGVVVECQDERSQHKNKARAMSLLQSKLLAAERAKQDQEQAAKRKSLVGSGDRSERIRTYNFPQGRVTDHRINLTLYQLDEVIEGDLDPVIGPLIRELQAEQLAELSGE</sequence>
<accession>B6J390</accession>
<proteinExistence type="inferred from homology"/>
<protein>
    <recommendedName>
        <fullName evidence="1">Peptide chain release factor 1</fullName>
        <shortName evidence="1">RF-1</shortName>
    </recommendedName>
</protein>